<organism>
    <name type="scientific">Salmonella arizonae (strain ATCC BAA-731 / CDC346-86 / RSK2980)</name>
    <dbReference type="NCBI Taxonomy" id="41514"/>
    <lineage>
        <taxon>Bacteria</taxon>
        <taxon>Pseudomonadati</taxon>
        <taxon>Pseudomonadota</taxon>
        <taxon>Gammaproteobacteria</taxon>
        <taxon>Enterobacterales</taxon>
        <taxon>Enterobacteriaceae</taxon>
        <taxon>Salmonella</taxon>
    </lineage>
</organism>
<feature type="chain" id="PRO_1000080999" description="Phosphoenolpyruvate carboxykinase (ATP)">
    <location>
        <begin position="1"/>
        <end position="539"/>
    </location>
</feature>
<feature type="binding site" evidence="1">
    <location>
        <position position="64"/>
    </location>
    <ligand>
        <name>substrate</name>
    </ligand>
</feature>
<feature type="binding site" evidence="1">
    <location>
        <position position="206"/>
    </location>
    <ligand>
        <name>substrate</name>
    </ligand>
</feature>
<feature type="binding site" evidence="1">
    <location>
        <position position="212"/>
    </location>
    <ligand>
        <name>ATP</name>
        <dbReference type="ChEBI" id="CHEBI:30616"/>
    </ligand>
</feature>
<feature type="binding site" evidence="1">
    <location>
        <position position="212"/>
    </location>
    <ligand>
        <name>Mn(2+)</name>
        <dbReference type="ChEBI" id="CHEBI:29035"/>
    </ligand>
</feature>
<feature type="binding site" evidence="1">
    <location>
        <position position="212"/>
    </location>
    <ligand>
        <name>substrate</name>
    </ligand>
</feature>
<feature type="binding site" evidence="1">
    <location>
        <position position="231"/>
    </location>
    <ligand>
        <name>ATP</name>
        <dbReference type="ChEBI" id="CHEBI:30616"/>
    </ligand>
</feature>
<feature type="binding site" evidence="1">
    <location>
        <position position="231"/>
    </location>
    <ligand>
        <name>Mn(2+)</name>
        <dbReference type="ChEBI" id="CHEBI:29035"/>
    </ligand>
</feature>
<feature type="binding site" evidence="1">
    <location>
        <begin position="247"/>
        <end position="255"/>
    </location>
    <ligand>
        <name>ATP</name>
        <dbReference type="ChEBI" id="CHEBI:30616"/>
    </ligand>
</feature>
<feature type="binding site" evidence="1">
    <location>
        <position position="268"/>
    </location>
    <ligand>
        <name>Mn(2+)</name>
        <dbReference type="ChEBI" id="CHEBI:29035"/>
    </ligand>
</feature>
<feature type="binding site" evidence="1">
    <location>
        <position position="296"/>
    </location>
    <ligand>
        <name>ATP</name>
        <dbReference type="ChEBI" id="CHEBI:30616"/>
    </ligand>
</feature>
<feature type="binding site" evidence="1">
    <location>
        <position position="332"/>
    </location>
    <ligand>
        <name>ATP</name>
        <dbReference type="ChEBI" id="CHEBI:30616"/>
    </ligand>
</feature>
<feature type="binding site" evidence="1">
    <location>
        <position position="332"/>
    </location>
    <ligand>
        <name>substrate</name>
    </ligand>
</feature>
<feature type="binding site" evidence="1">
    <location>
        <begin position="448"/>
        <end position="449"/>
    </location>
    <ligand>
        <name>ATP</name>
        <dbReference type="ChEBI" id="CHEBI:30616"/>
    </ligand>
</feature>
<feature type="binding site" evidence="1">
    <location>
        <position position="454"/>
    </location>
    <ligand>
        <name>ATP</name>
        <dbReference type="ChEBI" id="CHEBI:30616"/>
    </ligand>
</feature>
<gene>
    <name evidence="1" type="primary">pckA</name>
    <name type="ordered locus">SARI_04115</name>
</gene>
<sequence>MRVNNLTPQDLKAYGINDVQDIVYNPSYDTLYQEELNPGLEGYERGVLTNLGAVAVDTGIFTGRSPKDKYIVRDDTTRDTLWWSDKGKGKNDNKPLSQETWQHLKDLVTHQLSGKRLFVVDAFCGANADTRLSVRFITEVAWQAHFVKNMFIRPTDEELVNFKPDFIVMNGAKCTNPQWKEQGLNSENFVAFNLTERIQLIGGTWYGGEMKKGMFSVMNYLLPLKGIASMHCSANVGEKGDVAVFFGLSGTGKTTLSTDPKRRLIGDDEHGWDDDGVFNFEGGCYAKTIKLSKEAEPEIYHAIRRDALLENVTVREDGTVDFDDGSKTENTRVSYPIYHIDNIVKPVSKAGHATKVIFLTADAFGVLPPVSRLTANQTQYHFLSGFTAKLAGTERGVTEPTPTFSACFGAAFLSLHPTQYAEVLVKRMQAAGAQAYLVNTGWNGTGKRISIKDTRAIIDAILNGSLDNAETFRLPLFDLAIPTELPGVDTRILDPRNTYASPEQWQEKATALAKLFIENFEKYTDTPAGEALVTAGPKL</sequence>
<protein>
    <recommendedName>
        <fullName evidence="1">Phosphoenolpyruvate carboxykinase (ATP)</fullName>
        <shortName evidence="1">PCK</shortName>
        <shortName evidence="1">PEP carboxykinase</shortName>
        <shortName evidence="1">PEPCK</shortName>
        <ecNumber evidence="1">4.1.1.49</ecNumber>
    </recommendedName>
</protein>
<accession>A9MMC5</accession>
<proteinExistence type="inferred from homology"/>
<comment type="function">
    <text evidence="1">Involved in the gluconeogenesis. Catalyzes the conversion of oxaloacetate (OAA) to phosphoenolpyruvate (PEP) through direct phosphoryl transfer between the nucleoside triphosphate and OAA.</text>
</comment>
<comment type="catalytic activity">
    <reaction evidence="1">
        <text>oxaloacetate + ATP = phosphoenolpyruvate + ADP + CO2</text>
        <dbReference type="Rhea" id="RHEA:18617"/>
        <dbReference type="ChEBI" id="CHEBI:16452"/>
        <dbReference type="ChEBI" id="CHEBI:16526"/>
        <dbReference type="ChEBI" id="CHEBI:30616"/>
        <dbReference type="ChEBI" id="CHEBI:58702"/>
        <dbReference type="ChEBI" id="CHEBI:456216"/>
        <dbReference type="EC" id="4.1.1.49"/>
    </reaction>
</comment>
<comment type="cofactor">
    <cofactor evidence="1">
        <name>Mn(2+)</name>
        <dbReference type="ChEBI" id="CHEBI:29035"/>
    </cofactor>
    <text evidence="1">Binds 1 Mn(2+) ion per subunit.</text>
</comment>
<comment type="pathway">
    <text evidence="1">Carbohydrate biosynthesis; gluconeogenesis.</text>
</comment>
<comment type="subunit">
    <text evidence="1">Monomer.</text>
</comment>
<comment type="subcellular location">
    <subcellularLocation>
        <location evidence="1">Cytoplasm</location>
    </subcellularLocation>
</comment>
<comment type="similarity">
    <text evidence="1">Belongs to the phosphoenolpyruvate carboxykinase (ATP) family.</text>
</comment>
<keyword id="KW-0067">ATP-binding</keyword>
<keyword id="KW-0963">Cytoplasm</keyword>
<keyword id="KW-0210">Decarboxylase</keyword>
<keyword id="KW-0312">Gluconeogenesis</keyword>
<keyword id="KW-0456">Lyase</keyword>
<keyword id="KW-0464">Manganese</keyword>
<keyword id="KW-0479">Metal-binding</keyword>
<keyword id="KW-0547">Nucleotide-binding</keyword>
<keyword id="KW-1185">Reference proteome</keyword>
<reference key="1">
    <citation type="submission" date="2007-11" db="EMBL/GenBank/DDBJ databases">
        <authorList>
            <consortium name="The Salmonella enterica serovar Arizonae Genome Sequencing Project"/>
            <person name="McClelland M."/>
            <person name="Sanderson E.K."/>
            <person name="Porwollik S."/>
            <person name="Spieth J."/>
            <person name="Clifton W.S."/>
            <person name="Fulton R."/>
            <person name="Chunyan W."/>
            <person name="Wollam A."/>
            <person name="Shah N."/>
            <person name="Pepin K."/>
            <person name="Bhonagiri V."/>
            <person name="Nash W."/>
            <person name="Johnson M."/>
            <person name="Thiruvilangam P."/>
            <person name="Wilson R."/>
        </authorList>
    </citation>
    <scope>NUCLEOTIDE SEQUENCE [LARGE SCALE GENOMIC DNA]</scope>
    <source>
        <strain>ATCC BAA-731 / CDC346-86 / RSK2980</strain>
    </source>
</reference>
<dbReference type="EC" id="4.1.1.49" evidence="1"/>
<dbReference type="EMBL" id="CP000880">
    <property type="protein sequence ID" value="ABX23904.1"/>
    <property type="molecule type" value="Genomic_DNA"/>
</dbReference>
<dbReference type="SMR" id="A9MMC5"/>
<dbReference type="STRING" id="41514.SARI_04115"/>
<dbReference type="KEGG" id="ses:SARI_04115"/>
<dbReference type="HOGENOM" id="CLU_018247_0_1_6"/>
<dbReference type="UniPathway" id="UPA00138"/>
<dbReference type="Proteomes" id="UP000002084">
    <property type="component" value="Chromosome"/>
</dbReference>
<dbReference type="GO" id="GO:0005829">
    <property type="term" value="C:cytosol"/>
    <property type="evidence" value="ECO:0007669"/>
    <property type="project" value="TreeGrafter"/>
</dbReference>
<dbReference type="GO" id="GO:0005524">
    <property type="term" value="F:ATP binding"/>
    <property type="evidence" value="ECO:0007669"/>
    <property type="project" value="UniProtKB-UniRule"/>
</dbReference>
<dbReference type="GO" id="GO:0046872">
    <property type="term" value="F:metal ion binding"/>
    <property type="evidence" value="ECO:0007669"/>
    <property type="project" value="UniProtKB-KW"/>
</dbReference>
<dbReference type="GO" id="GO:0004612">
    <property type="term" value="F:phosphoenolpyruvate carboxykinase (ATP) activity"/>
    <property type="evidence" value="ECO:0007669"/>
    <property type="project" value="UniProtKB-UniRule"/>
</dbReference>
<dbReference type="GO" id="GO:0006094">
    <property type="term" value="P:gluconeogenesis"/>
    <property type="evidence" value="ECO:0007669"/>
    <property type="project" value="UniProtKB-UniRule"/>
</dbReference>
<dbReference type="CDD" id="cd00484">
    <property type="entry name" value="PEPCK_ATP"/>
    <property type="match status" value="1"/>
</dbReference>
<dbReference type="FunFam" id="2.170.8.10:FF:000001">
    <property type="entry name" value="Phosphoenolpyruvate carboxykinase (ATP)"/>
    <property type="match status" value="1"/>
</dbReference>
<dbReference type="FunFam" id="3.40.449.10:FF:000001">
    <property type="entry name" value="Phosphoenolpyruvate carboxykinase (ATP)"/>
    <property type="match status" value="1"/>
</dbReference>
<dbReference type="Gene3D" id="3.90.228.20">
    <property type="match status" value="1"/>
</dbReference>
<dbReference type="Gene3D" id="3.40.449.10">
    <property type="entry name" value="Phosphoenolpyruvate Carboxykinase, domain 1"/>
    <property type="match status" value="1"/>
</dbReference>
<dbReference type="Gene3D" id="2.170.8.10">
    <property type="entry name" value="Phosphoenolpyruvate Carboxykinase, domain 2"/>
    <property type="match status" value="1"/>
</dbReference>
<dbReference type="HAMAP" id="MF_00453">
    <property type="entry name" value="PEPCK_ATP"/>
    <property type="match status" value="1"/>
</dbReference>
<dbReference type="InterPro" id="IPR001272">
    <property type="entry name" value="PEP_carboxykinase_ATP"/>
</dbReference>
<dbReference type="InterPro" id="IPR013035">
    <property type="entry name" value="PEP_carboxykinase_C"/>
</dbReference>
<dbReference type="InterPro" id="IPR008210">
    <property type="entry name" value="PEP_carboxykinase_N"/>
</dbReference>
<dbReference type="InterPro" id="IPR015994">
    <property type="entry name" value="PEPCK_ATP_CS"/>
</dbReference>
<dbReference type="NCBIfam" id="TIGR00224">
    <property type="entry name" value="pckA"/>
    <property type="match status" value="1"/>
</dbReference>
<dbReference type="NCBIfam" id="NF006819">
    <property type="entry name" value="PRK09344.1-1"/>
    <property type="match status" value="1"/>
</dbReference>
<dbReference type="NCBIfam" id="NF006820">
    <property type="entry name" value="PRK09344.1-2"/>
    <property type="match status" value="1"/>
</dbReference>
<dbReference type="NCBIfam" id="NF006821">
    <property type="entry name" value="PRK09344.1-3"/>
    <property type="match status" value="1"/>
</dbReference>
<dbReference type="PANTHER" id="PTHR30031:SF0">
    <property type="entry name" value="PHOSPHOENOLPYRUVATE CARBOXYKINASE (ATP)"/>
    <property type="match status" value="1"/>
</dbReference>
<dbReference type="PANTHER" id="PTHR30031">
    <property type="entry name" value="PHOSPHOENOLPYRUVATE CARBOXYKINASE ATP"/>
    <property type="match status" value="1"/>
</dbReference>
<dbReference type="Pfam" id="PF01293">
    <property type="entry name" value="PEPCK_ATP"/>
    <property type="match status" value="1"/>
</dbReference>
<dbReference type="PIRSF" id="PIRSF006294">
    <property type="entry name" value="PEP_crbxkin"/>
    <property type="match status" value="1"/>
</dbReference>
<dbReference type="SUPFAM" id="SSF68923">
    <property type="entry name" value="PEP carboxykinase N-terminal domain"/>
    <property type="match status" value="1"/>
</dbReference>
<dbReference type="SUPFAM" id="SSF53795">
    <property type="entry name" value="PEP carboxykinase-like"/>
    <property type="match status" value="1"/>
</dbReference>
<dbReference type="PROSITE" id="PS00532">
    <property type="entry name" value="PEPCK_ATP"/>
    <property type="match status" value="1"/>
</dbReference>
<evidence type="ECO:0000255" key="1">
    <source>
        <dbReference type="HAMAP-Rule" id="MF_00453"/>
    </source>
</evidence>
<name>PCKA_SALAR</name>